<protein>
    <recommendedName>
        <fullName evidence="3 4">U2-myrmicitoxin-Tb1a</fullName>
    </recommendedName>
    <alternativeName>
        <fullName evidence="3 4">U2-MYRTX-Tb1a</fullName>
    </alternativeName>
</protein>
<sequence length="40" mass="3883">AEAMAEAMADAMADAMADAMADAMAEAAADPPPGFIGVRG</sequence>
<evidence type="ECO:0000269" key="1">
    <source>
    </source>
</evidence>
<evidence type="ECO:0000269" key="2">
    <source>
    </source>
</evidence>
<evidence type="ECO:0000303" key="3">
    <source>
    </source>
</evidence>
<evidence type="ECO:0000303" key="4">
    <source>
    </source>
</evidence>
<evidence type="ECO:0000305" key="5"/>
<evidence type="ECO:0000305" key="6">
    <source>
    </source>
</evidence>
<evidence type="ECO:0000305" key="7">
    <source>
    </source>
</evidence>
<evidence type="ECO:0000312" key="8">
    <source>
        <dbReference type="EMBL" id="QJP03493.1"/>
    </source>
</evidence>
<dbReference type="EMBL" id="MN397946">
    <property type="protein sequence ID" value="QJP03493.1"/>
    <property type="molecule type" value="mRNA"/>
</dbReference>
<dbReference type="GO" id="GO:0005576">
    <property type="term" value="C:extracellular region"/>
    <property type="evidence" value="ECO:0000314"/>
    <property type="project" value="UniProtKB"/>
</dbReference>
<organism>
    <name type="scientific">Tetramorium bicarinatum</name>
    <name type="common">Tramp ant</name>
    <dbReference type="NCBI Taxonomy" id="219812"/>
    <lineage>
        <taxon>Eukaryota</taxon>
        <taxon>Metazoa</taxon>
        <taxon>Ecdysozoa</taxon>
        <taxon>Arthropoda</taxon>
        <taxon>Hexapoda</taxon>
        <taxon>Insecta</taxon>
        <taxon>Pterygota</taxon>
        <taxon>Neoptera</taxon>
        <taxon>Endopterygota</taxon>
        <taxon>Hymenoptera</taxon>
        <taxon>Apocrita</taxon>
        <taxon>Aculeata</taxon>
        <taxon>Formicoidea</taxon>
        <taxon>Formicidae</taxon>
        <taxon>Myrmicinae</taxon>
        <taxon>Tetramorium</taxon>
    </lineage>
</organism>
<name>TX2A_TETBN</name>
<reference evidence="8" key="1">
    <citation type="journal article" date="2018" name="J. Proteome Res.">
        <title>Deciphering the Molecular Diversity of an Ant Venom Peptidome through a Venomics Approach.</title>
        <authorList>
            <person name="Touchard A."/>
            <person name="Tene N."/>
            <person name="Song P.C.T."/>
            <person name="Lefranc B."/>
            <person name="Leprince J."/>
            <person name="Treilhou M."/>
            <person name="Bonnafe E."/>
        </authorList>
    </citation>
    <scope>NUCLEOTIDE SEQUENCE [MRNA]</scope>
    <scope>MASS SPECTROMETRY</scope>
    <scope>AMIDATION AT ARG-39</scope>
    <source>
        <tissue>Venom</tissue>
        <tissue>Venom gland</tissue>
    </source>
</reference>
<reference key="2">
    <citation type="journal article" date="2023" name="Toxins">
        <title>Discovery of an insect neuroactive helix ring peptide from ant venom.</title>
        <authorList>
            <person name="Barasse V."/>
            <person name="Jouvensal L."/>
            <person name="Boy G."/>
            <person name="Billet A."/>
            <person name="Ascoet S."/>
            <person name="Lefranc B."/>
            <person name="Leprince J."/>
            <person name="Dejean A."/>
            <person name="Lacotte V."/>
            <person name="Rahioui I."/>
            <person name="Sivignon C."/>
            <person name="Gaget K."/>
            <person name="Ribeiro Lopes M."/>
            <person name="Calevro F."/>
            <person name="Da Silva P."/>
            <person name="Loth K."/>
            <person name="Paquet F."/>
            <person name="Treilhou M."/>
            <person name="Bonnafe E."/>
            <person name="Touchard A."/>
        </authorList>
    </citation>
    <scope>SYNTHESIS OF 30-39</scope>
</reference>
<proteinExistence type="evidence at protein level"/>
<accession>A0A6M3Z4R4</accession>
<comment type="function">
    <text evidence="2">Venom protein with unknown function. Does not induce paralysis when a high dose is administered by intrathoracic injection into the blowfly Lucilia caesar.</text>
</comment>
<comment type="subcellular location">
    <subcellularLocation>
        <location evidence="6">Secreted</location>
    </subcellularLocation>
</comment>
<comment type="tissue specificity">
    <text evidence="6">Expressed by the venom gland.</text>
</comment>
<comment type="mass spectrometry" mass="1052.58" method="Electrospray" evidence="1"/>
<comment type="miscellaneous">
    <text evidence="1">Is very weakly abundant (1.81%).</text>
</comment>
<comment type="similarity">
    <text evidence="5">Belongs to the formicidae venom precursor-01 superfamily.</text>
</comment>
<keyword id="KW-0027">Amidation</keyword>
<keyword id="KW-0964">Secreted</keyword>
<keyword id="KW-0732">Signal</keyword>
<feature type="signal peptide" evidence="5">
    <location>
        <begin position="1" status="less than"/>
        <end position="3"/>
    </location>
</feature>
<feature type="propeptide" id="PRO_0000459805" evidence="5">
    <location>
        <begin position="4"/>
        <end position="29"/>
    </location>
</feature>
<feature type="peptide" id="PRO_0000459806" description="U2-myrmicitoxin-Tb1a" evidence="7">
    <location>
        <begin position="30"/>
        <end position="39"/>
    </location>
</feature>
<feature type="modified residue" description="Arginine amide" evidence="7">
    <location>
        <position position="39"/>
    </location>
</feature>
<feature type="non-terminal residue" evidence="8">
    <location>
        <position position="1"/>
    </location>
</feature>